<name>MAP21_ASPTN</name>
<evidence type="ECO:0000255" key="1">
    <source>
        <dbReference type="HAMAP-Rule" id="MF_03175"/>
    </source>
</evidence>
<evidence type="ECO:0000256" key="2">
    <source>
        <dbReference type="SAM" id="MobiDB-lite"/>
    </source>
</evidence>
<protein>
    <recommendedName>
        <fullName evidence="1">Methionine aminopeptidase 2-1</fullName>
        <shortName evidence="1">MAP 2-1</shortName>
        <shortName evidence="1">MetAP 2-1</shortName>
        <ecNumber evidence="1">3.4.11.18</ecNumber>
    </recommendedName>
    <alternativeName>
        <fullName evidence="1">Peptidase M</fullName>
    </alternativeName>
</protein>
<keyword id="KW-0031">Aminopeptidase</keyword>
<keyword id="KW-0963">Cytoplasm</keyword>
<keyword id="KW-0378">Hydrolase</keyword>
<keyword id="KW-0479">Metal-binding</keyword>
<keyword id="KW-0645">Protease</keyword>
<keyword id="KW-1185">Reference proteome</keyword>
<organism>
    <name type="scientific">Aspergillus terreus (strain NIH 2624 / FGSC A1156)</name>
    <dbReference type="NCBI Taxonomy" id="341663"/>
    <lineage>
        <taxon>Eukaryota</taxon>
        <taxon>Fungi</taxon>
        <taxon>Dikarya</taxon>
        <taxon>Ascomycota</taxon>
        <taxon>Pezizomycotina</taxon>
        <taxon>Eurotiomycetes</taxon>
        <taxon>Eurotiomycetidae</taxon>
        <taxon>Eurotiales</taxon>
        <taxon>Aspergillaceae</taxon>
        <taxon>Aspergillus</taxon>
        <taxon>Aspergillus subgen. Circumdati</taxon>
    </lineage>
</organism>
<dbReference type="EC" id="3.4.11.18" evidence="1"/>
<dbReference type="EMBL" id="CH476609">
    <property type="protein sequence ID" value="EAU29595.1"/>
    <property type="molecule type" value="Genomic_DNA"/>
</dbReference>
<dbReference type="RefSeq" id="XP_001209448.1">
    <property type="nucleotide sequence ID" value="XM_001209448.1"/>
</dbReference>
<dbReference type="SMR" id="Q0C838"/>
<dbReference type="STRING" id="341663.Q0C838"/>
<dbReference type="MEROPS" id="M24.002"/>
<dbReference type="EnsemblFungi" id="EAU29595">
    <property type="protein sequence ID" value="EAU29595"/>
    <property type="gene ID" value="ATEG_10146"/>
</dbReference>
<dbReference type="GeneID" id="4319451"/>
<dbReference type="VEuPathDB" id="FungiDB:ATEG_10146"/>
<dbReference type="eggNOG" id="KOG2775">
    <property type="taxonomic scope" value="Eukaryota"/>
</dbReference>
<dbReference type="HOGENOM" id="CLU_015857_7_1_1"/>
<dbReference type="OMA" id="ILRYHIH"/>
<dbReference type="OrthoDB" id="7848262at2759"/>
<dbReference type="Proteomes" id="UP000007963">
    <property type="component" value="Unassembled WGS sequence"/>
</dbReference>
<dbReference type="GO" id="GO:0005737">
    <property type="term" value="C:cytoplasm"/>
    <property type="evidence" value="ECO:0007669"/>
    <property type="project" value="UniProtKB-SubCell"/>
</dbReference>
<dbReference type="GO" id="GO:0004239">
    <property type="term" value="F:initiator methionyl aminopeptidase activity"/>
    <property type="evidence" value="ECO:0007669"/>
    <property type="project" value="UniProtKB-UniRule"/>
</dbReference>
<dbReference type="GO" id="GO:0046872">
    <property type="term" value="F:metal ion binding"/>
    <property type="evidence" value="ECO:0007669"/>
    <property type="project" value="UniProtKB-UniRule"/>
</dbReference>
<dbReference type="GO" id="GO:0070006">
    <property type="term" value="F:metalloaminopeptidase activity"/>
    <property type="evidence" value="ECO:0007669"/>
    <property type="project" value="UniProtKB-UniRule"/>
</dbReference>
<dbReference type="GO" id="GO:0006508">
    <property type="term" value="P:proteolysis"/>
    <property type="evidence" value="ECO:0007669"/>
    <property type="project" value="UniProtKB-KW"/>
</dbReference>
<dbReference type="CDD" id="cd01088">
    <property type="entry name" value="MetAP2"/>
    <property type="match status" value="1"/>
</dbReference>
<dbReference type="Gene3D" id="3.90.230.10">
    <property type="entry name" value="Creatinase/methionine aminopeptidase superfamily"/>
    <property type="match status" value="1"/>
</dbReference>
<dbReference type="Gene3D" id="1.10.10.10">
    <property type="entry name" value="Winged helix-like DNA-binding domain superfamily/Winged helix DNA-binding domain"/>
    <property type="match status" value="1"/>
</dbReference>
<dbReference type="HAMAP" id="MF_03175">
    <property type="entry name" value="MetAP_2_euk"/>
    <property type="match status" value="1"/>
</dbReference>
<dbReference type="InterPro" id="IPR036005">
    <property type="entry name" value="Creatinase/aminopeptidase-like"/>
</dbReference>
<dbReference type="InterPro" id="IPR050247">
    <property type="entry name" value="Met_Aminopeptidase_Type2"/>
</dbReference>
<dbReference type="InterPro" id="IPR000994">
    <property type="entry name" value="Pept_M24"/>
</dbReference>
<dbReference type="InterPro" id="IPR001714">
    <property type="entry name" value="Pept_M24_MAP"/>
</dbReference>
<dbReference type="InterPro" id="IPR002468">
    <property type="entry name" value="Pept_M24A_MAP2"/>
</dbReference>
<dbReference type="InterPro" id="IPR018349">
    <property type="entry name" value="Pept_M24A_MAP2_BS"/>
</dbReference>
<dbReference type="InterPro" id="IPR036388">
    <property type="entry name" value="WH-like_DNA-bd_sf"/>
</dbReference>
<dbReference type="InterPro" id="IPR036390">
    <property type="entry name" value="WH_DNA-bd_sf"/>
</dbReference>
<dbReference type="NCBIfam" id="TIGR00501">
    <property type="entry name" value="met_pdase_II"/>
    <property type="match status" value="1"/>
</dbReference>
<dbReference type="PANTHER" id="PTHR45777">
    <property type="entry name" value="METHIONINE AMINOPEPTIDASE 2"/>
    <property type="match status" value="1"/>
</dbReference>
<dbReference type="PANTHER" id="PTHR45777:SF1">
    <property type="entry name" value="METHIONINE AMINOPEPTIDASE 2-2"/>
    <property type="match status" value="1"/>
</dbReference>
<dbReference type="Pfam" id="PF00557">
    <property type="entry name" value="Peptidase_M24"/>
    <property type="match status" value="1"/>
</dbReference>
<dbReference type="PRINTS" id="PR00599">
    <property type="entry name" value="MAPEPTIDASE"/>
</dbReference>
<dbReference type="SUPFAM" id="SSF55920">
    <property type="entry name" value="Creatinase/aminopeptidase"/>
    <property type="match status" value="1"/>
</dbReference>
<dbReference type="SUPFAM" id="SSF46785">
    <property type="entry name" value="Winged helix' DNA-binding domain"/>
    <property type="match status" value="1"/>
</dbReference>
<dbReference type="PROSITE" id="PS01202">
    <property type="entry name" value="MAP_2"/>
    <property type="match status" value="1"/>
</dbReference>
<sequence length="453" mass="49298">MGSKTPDGHRQSPDASNSSELKPASPNPKPSQNGSQSADLDRGVVGEDDDDDDENEEVGVITTNAEKKKKRKKSKKKNKKSKSGAAPATQQTTPPRVPLSTLFPSGYPVGELVPYENTARTTDEESQYNSRLWDEDLLTDYRQAAEIHRQVRQYAQAELIKPGASLQSIAEGIEDGVRALCGHQGLDTGDALKAGMGFPTGLCLNNIAAHWTPNPGGKDVILEKSDVLKVDFGVHINGRIVDSAFTVAFDHTYDNLLTAVKEATNTGIMVHVFLDDLVGSEVMESYEVDLAGKTIPVKAIRNITGHDILRYNIHGGKQIPFIKNNNPDKMEEGEVFAIETFGSTGKGVLDDDIGIYGYGRNANVPGSHLRLASAKSLLKTIDANFGSLVFCRRYLERLGVKSYHLGMKNLIDNGIVESYAPLVDVKGSYTAQFEHTILLHSGGKEVISRGEDY</sequence>
<accession>Q0C838</accession>
<gene>
    <name type="ORF">ATEG_10146</name>
</gene>
<reference key="1">
    <citation type="submission" date="2005-09" db="EMBL/GenBank/DDBJ databases">
        <title>Annotation of the Aspergillus terreus NIH2624 genome.</title>
        <authorList>
            <person name="Birren B.W."/>
            <person name="Lander E.S."/>
            <person name="Galagan J.E."/>
            <person name="Nusbaum C."/>
            <person name="Devon K."/>
            <person name="Henn M."/>
            <person name="Ma L.-J."/>
            <person name="Jaffe D.B."/>
            <person name="Butler J."/>
            <person name="Alvarez P."/>
            <person name="Gnerre S."/>
            <person name="Grabherr M."/>
            <person name="Kleber M."/>
            <person name="Mauceli E.W."/>
            <person name="Brockman W."/>
            <person name="Rounsley S."/>
            <person name="Young S.K."/>
            <person name="LaButti K."/>
            <person name="Pushparaj V."/>
            <person name="DeCaprio D."/>
            <person name="Crawford M."/>
            <person name="Koehrsen M."/>
            <person name="Engels R."/>
            <person name="Montgomery P."/>
            <person name="Pearson M."/>
            <person name="Howarth C."/>
            <person name="Larson L."/>
            <person name="Luoma S."/>
            <person name="White J."/>
            <person name="Alvarado L."/>
            <person name="Kodira C.D."/>
            <person name="Zeng Q."/>
            <person name="Oleary S."/>
            <person name="Yandava C."/>
            <person name="Denning D.W."/>
            <person name="Nierman W.C."/>
            <person name="Milne T."/>
            <person name="Madden K."/>
        </authorList>
    </citation>
    <scope>NUCLEOTIDE SEQUENCE [LARGE SCALE GENOMIC DNA]</scope>
    <source>
        <strain>NIH 2624 / FGSC A1156</strain>
    </source>
</reference>
<proteinExistence type="inferred from homology"/>
<feature type="chain" id="PRO_0000407625" description="Methionine aminopeptidase 2-1">
    <location>
        <begin position="1"/>
        <end position="453"/>
    </location>
</feature>
<feature type="region of interest" description="Disordered" evidence="2">
    <location>
        <begin position="1"/>
        <end position="101"/>
    </location>
</feature>
<feature type="compositionally biased region" description="Basic and acidic residues" evidence="2">
    <location>
        <begin position="1"/>
        <end position="12"/>
    </location>
</feature>
<feature type="compositionally biased region" description="Acidic residues" evidence="2">
    <location>
        <begin position="46"/>
        <end position="57"/>
    </location>
</feature>
<feature type="compositionally biased region" description="Basic residues" evidence="2">
    <location>
        <begin position="67"/>
        <end position="82"/>
    </location>
</feature>
<feature type="binding site" evidence="1">
    <location>
        <position position="210"/>
    </location>
    <ligand>
        <name>substrate</name>
    </ligand>
</feature>
<feature type="binding site" evidence="1">
    <location>
        <position position="231"/>
    </location>
    <ligand>
        <name>a divalent metal cation</name>
        <dbReference type="ChEBI" id="CHEBI:60240"/>
        <label>1</label>
    </ligand>
</feature>
<feature type="binding site" evidence="1">
    <location>
        <position position="242"/>
    </location>
    <ligand>
        <name>a divalent metal cation</name>
        <dbReference type="ChEBI" id="CHEBI:60240"/>
        <label>1</label>
    </ligand>
</feature>
<feature type="binding site" evidence="1">
    <location>
        <position position="242"/>
    </location>
    <ligand>
        <name>a divalent metal cation</name>
        <dbReference type="ChEBI" id="CHEBI:60240"/>
        <label>2</label>
        <note>catalytic</note>
    </ligand>
</feature>
<feature type="binding site" evidence="1">
    <location>
        <position position="306"/>
    </location>
    <ligand>
        <name>a divalent metal cation</name>
        <dbReference type="ChEBI" id="CHEBI:60240"/>
        <label>2</label>
        <note>catalytic</note>
    </ligand>
</feature>
<feature type="binding site" evidence="1">
    <location>
        <position position="314"/>
    </location>
    <ligand>
        <name>substrate</name>
    </ligand>
</feature>
<feature type="binding site" evidence="1">
    <location>
        <position position="339"/>
    </location>
    <ligand>
        <name>a divalent metal cation</name>
        <dbReference type="ChEBI" id="CHEBI:60240"/>
        <label>2</label>
        <note>catalytic</note>
    </ligand>
</feature>
<feature type="binding site" evidence="1">
    <location>
        <position position="434"/>
    </location>
    <ligand>
        <name>a divalent metal cation</name>
        <dbReference type="ChEBI" id="CHEBI:60240"/>
        <label>1</label>
    </ligand>
</feature>
<feature type="binding site" evidence="1">
    <location>
        <position position="434"/>
    </location>
    <ligand>
        <name>a divalent metal cation</name>
        <dbReference type="ChEBI" id="CHEBI:60240"/>
        <label>2</label>
        <note>catalytic</note>
    </ligand>
</feature>
<comment type="function">
    <text evidence="1">Cotranslationally removes the N-terminal methionine from nascent proteins. The N-terminal methionine is often cleaved when the second residue in the primary sequence is small and uncharged (Met-Ala-, Cys, Gly, Pro, Ser, Thr, or Val).</text>
</comment>
<comment type="catalytic activity">
    <reaction evidence="1">
        <text>Release of N-terminal amino acids, preferentially methionine, from peptides and arylamides.</text>
        <dbReference type="EC" id="3.4.11.18"/>
    </reaction>
</comment>
<comment type="cofactor">
    <cofactor evidence="1">
        <name>Co(2+)</name>
        <dbReference type="ChEBI" id="CHEBI:48828"/>
    </cofactor>
    <cofactor evidence="1">
        <name>Zn(2+)</name>
        <dbReference type="ChEBI" id="CHEBI:29105"/>
    </cofactor>
    <cofactor evidence="1">
        <name>Mn(2+)</name>
        <dbReference type="ChEBI" id="CHEBI:29035"/>
    </cofactor>
    <cofactor evidence="1">
        <name>Fe(2+)</name>
        <dbReference type="ChEBI" id="CHEBI:29033"/>
    </cofactor>
    <text evidence="1">Binds 2 divalent metal cations per subunit. Has a high-affinity and a low affinity metal-binding site. The true nature of the physiological cofactor is under debate. The enzyme is active with cobalt, zinc, manganese or divalent iron ions. Most likely, methionine aminopeptidases function as mononuclear Fe(2+)-metalloproteases under physiological conditions, and the catalytically relevant metal-binding site has been assigned to the histidine-containing high-affinity site.</text>
</comment>
<comment type="subcellular location">
    <subcellularLocation>
        <location evidence="1">Cytoplasm</location>
    </subcellularLocation>
</comment>
<comment type="similarity">
    <text evidence="1">Belongs to the peptidase M24A family. Methionine aminopeptidase eukaryotic type 2 subfamily.</text>
</comment>